<accession>C1CMP6</accession>
<comment type="similarity">
    <text evidence="1">Belongs to the CinA family.</text>
</comment>
<protein>
    <recommendedName>
        <fullName evidence="1">Putative competence-damage inducible protein</fullName>
    </recommendedName>
</protein>
<sequence length="418" mass="45075">MKAEIIAVGTEILTGQIVNTNAQFLSEKLAEIGVDVYFQTAVGDNEVRLLSLLEIASQRSSLVILTGGLGPTEDDLTKQTLAKFLGKALVFDPQAQEKLDIFFALRPDYARTPNNERQAQIVEGAIPLPNETGLAVGGKLEVDGVTYVVLPGPPSELKPMVLNQLLPKLMTGSKLYSRVLRFFGIGESQLVTILADLIDNQIDPTLAPYAKTGEVTLRLSTKASSQEEANQALDILENQILDCQTFEGISLRDFCYGYGEETSLASIVVEELKRQGKTIAAAESLTAGLFQATVANFSGVSSIFKGGFVTYSLEEKSRMLDIPAKNLEEHGVVSEFTAQKMAEQARSKTQSDFGISLTGVAGPDSLEGHPVGTVFIGLAQEQGTEVIKVNIGGRSRADVRHIAVMHAFNLVRKALLSD</sequence>
<dbReference type="EMBL" id="CP000920">
    <property type="protein sequence ID" value="ACO21922.1"/>
    <property type="molecule type" value="Genomic_DNA"/>
</dbReference>
<dbReference type="RefSeq" id="WP_000642709.1">
    <property type="nucleotide sequence ID" value="NC_012467.1"/>
</dbReference>
<dbReference type="SMR" id="C1CMP6"/>
<dbReference type="KEGG" id="spp:SPP_1969"/>
<dbReference type="HOGENOM" id="CLU_030805_9_3_9"/>
<dbReference type="CDD" id="cd00885">
    <property type="entry name" value="cinA"/>
    <property type="match status" value="1"/>
</dbReference>
<dbReference type="Gene3D" id="3.30.70.2860">
    <property type="match status" value="1"/>
</dbReference>
<dbReference type="Gene3D" id="3.90.950.20">
    <property type="entry name" value="CinA-like"/>
    <property type="match status" value="1"/>
</dbReference>
<dbReference type="Gene3D" id="3.40.980.10">
    <property type="entry name" value="MoaB/Mog-like domain"/>
    <property type="match status" value="1"/>
</dbReference>
<dbReference type="HAMAP" id="MF_00226_B">
    <property type="entry name" value="CinA_B"/>
    <property type="match status" value="1"/>
</dbReference>
<dbReference type="InterPro" id="IPR050101">
    <property type="entry name" value="CinA"/>
</dbReference>
<dbReference type="InterPro" id="IPR036653">
    <property type="entry name" value="CinA-like_C"/>
</dbReference>
<dbReference type="InterPro" id="IPR008136">
    <property type="entry name" value="CinA_C"/>
</dbReference>
<dbReference type="InterPro" id="IPR041424">
    <property type="entry name" value="CinA_KH"/>
</dbReference>
<dbReference type="InterPro" id="IPR008135">
    <property type="entry name" value="Competence-induced_CinA"/>
</dbReference>
<dbReference type="InterPro" id="IPR036425">
    <property type="entry name" value="MoaB/Mog-like_dom_sf"/>
</dbReference>
<dbReference type="InterPro" id="IPR001453">
    <property type="entry name" value="MoaB/Mog_dom"/>
</dbReference>
<dbReference type="NCBIfam" id="TIGR00200">
    <property type="entry name" value="cinA_nterm"/>
    <property type="match status" value="1"/>
</dbReference>
<dbReference type="NCBIfam" id="TIGR00199">
    <property type="entry name" value="PncC_domain"/>
    <property type="match status" value="1"/>
</dbReference>
<dbReference type="NCBIfam" id="NF001813">
    <property type="entry name" value="PRK00549.1"/>
    <property type="match status" value="1"/>
</dbReference>
<dbReference type="PANTHER" id="PTHR13939">
    <property type="entry name" value="NICOTINAMIDE-NUCLEOTIDE AMIDOHYDROLASE PNCC"/>
    <property type="match status" value="1"/>
</dbReference>
<dbReference type="PANTHER" id="PTHR13939:SF0">
    <property type="entry name" value="NMN AMIDOHYDROLASE-LIKE PROTEIN YFAY"/>
    <property type="match status" value="1"/>
</dbReference>
<dbReference type="Pfam" id="PF02464">
    <property type="entry name" value="CinA"/>
    <property type="match status" value="1"/>
</dbReference>
<dbReference type="Pfam" id="PF18146">
    <property type="entry name" value="CinA_KH"/>
    <property type="match status" value="1"/>
</dbReference>
<dbReference type="Pfam" id="PF00994">
    <property type="entry name" value="MoCF_biosynth"/>
    <property type="match status" value="1"/>
</dbReference>
<dbReference type="PIRSF" id="PIRSF006728">
    <property type="entry name" value="CinA"/>
    <property type="match status" value="1"/>
</dbReference>
<dbReference type="SMART" id="SM00852">
    <property type="entry name" value="MoCF_biosynth"/>
    <property type="match status" value="1"/>
</dbReference>
<dbReference type="SUPFAM" id="SSF142433">
    <property type="entry name" value="CinA-like"/>
    <property type="match status" value="1"/>
</dbReference>
<dbReference type="SUPFAM" id="SSF53218">
    <property type="entry name" value="Molybdenum cofactor biosynthesis proteins"/>
    <property type="match status" value="1"/>
</dbReference>
<feature type="chain" id="PRO_1000124994" description="Putative competence-damage inducible protein">
    <location>
        <begin position="1"/>
        <end position="418"/>
    </location>
</feature>
<organism>
    <name type="scientific">Streptococcus pneumoniae (strain P1031)</name>
    <dbReference type="NCBI Taxonomy" id="488223"/>
    <lineage>
        <taxon>Bacteria</taxon>
        <taxon>Bacillati</taxon>
        <taxon>Bacillota</taxon>
        <taxon>Bacilli</taxon>
        <taxon>Lactobacillales</taxon>
        <taxon>Streptococcaceae</taxon>
        <taxon>Streptococcus</taxon>
    </lineage>
</organism>
<reference key="1">
    <citation type="journal article" date="2010" name="Genome Biol.">
        <title>Structure and dynamics of the pan-genome of Streptococcus pneumoniae and closely related species.</title>
        <authorList>
            <person name="Donati C."/>
            <person name="Hiller N.L."/>
            <person name="Tettelin H."/>
            <person name="Muzzi A."/>
            <person name="Croucher N.J."/>
            <person name="Angiuoli S.V."/>
            <person name="Oggioni M."/>
            <person name="Dunning Hotopp J.C."/>
            <person name="Hu F.Z."/>
            <person name="Riley D.R."/>
            <person name="Covacci A."/>
            <person name="Mitchell T.J."/>
            <person name="Bentley S.D."/>
            <person name="Kilian M."/>
            <person name="Ehrlich G.D."/>
            <person name="Rappuoli R."/>
            <person name="Moxon E.R."/>
            <person name="Masignani V."/>
        </authorList>
    </citation>
    <scope>NUCLEOTIDE SEQUENCE [LARGE SCALE GENOMIC DNA]</scope>
    <source>
        <strain>P1031</strain>
    </source>
</reference>
<name>CINA_STRZP</name>
<evidence type="ECO:0000255" key="1">
    <source>
        <dbReference type="HAMAP-Rule" id="MF_00226"/>
    </source>
</evidence>
<gene>
    <name evidence="1" type="primary">cinA</name>
    <name type="ordered locus">SPP_1969</name>
</gene>
<proteinExistence type="inferred from homology"/>